<sequence length="612" mass="68156">MRLKSFSTTLDTLRRRFNDSSSEEDKLEKNIQDETSIKEVSLQDAKQSDEKGVEEKVFNDESFSIDVAPKPEDELSGIVKARYLTEHSSRISFYICYFSIFLLFFAISFQAECYYSLTAYATSAFAGHSLLSTIAVANNIISAAIKPPLARLSDVFGRLEAFLFSLLLYLVGLILMAASTNVQTYAGGSVLYNAGYTGVELIMTIFMADTSSMANRSLVLGISYLPFVVTIWIGPRVAQEFYMHSTWRWGIAVWTILIPACSIPFLAVYSYYQFRAWREGALKGTLTINPVELFKKLDIIGLILMTAGLALVLLSISLASYDTGKWSDAKFIVMIIIGGLCLIAFVLYEIFVASFPALPFRLMREPTIGACCAMSFLFYITFYCWDNYYYSFLQVVHYTSITAAGYISYTYSFTSCATGFFLGILIRLTKRYKWYFVASIPVYILGQGLMIRYRGEQYNWGYQIMPQIIVGIGGGVIANLLTVAVQTVVSTENFAIVTALVSTVTPIGGAVGSAISGAIWNSVMPKRLEKNLPSDLKDQAYTIFESLTVQLSYTRGTDARNAIILSYSEVQKILTSVATGFAGAMIFPVWFVANPRLSTVKTHIFDSKESKV</sequence>
<accession>O74395</accession>
<keyword id="KW-0406">Ion transport</keyword>
<keyword id="KW-0408">Iron</keyword>
<keyword id="KW-0410">Iron transport</keyword>
<keyword id="KW-0472">Membrane</keyword>
<keyword id="KW-0597">Phosphoprotein</keyword>
<keyword id="KW-1185">Reference proteome</keyword>
<keyword id="KW-0812">Transmembrane</keyword>
<keyword id="KW-1133">Transmembrane helix</keyword>
<keyword id="KW-0813">Transport</keyword>
<name>STR1_SCHPO</name>
<protein>
    <recommendedName>
        <fullName>Siderophore iron transporter 1</fullName>
    </recommendedName>
</protein>
<evidence type="ECO:0000255" key="1"/>
<evidence type="ECO:0000269" key="2">
    <source>
    </source>
</evidence>
<evidence type="ECO:0000269" key="3">
    <source>
    </source>
</evidence>
<evidence type="ECO:0000305" key="4"/>
<comment type="function">
    <text evidence="2">Involved in the transport of siderophore iron and so has a role in iron homeostasis.</text>
</comment>
<comment type="subcellular location">
    <subcellularLocation>
        <location evidence="4">Membrane</location>
        <topology evidence="4">Multi-pass membrane protein</topology>
    </subcellularLocation>
</comment>
<comment type="similarity">
    <text evidence="4">Belongs to the major facilitator superfamily.</text>
</comment>
<organism>
    <name type="scientific">Schizosaccharomyces pombe (strain 972 / ATCC 24843)</name>
    <name type="common">Fission yeast</name>
    <dbReference type="NCBI Taxonomy" id="284812"/>
    <lineage>
        <taxon>Eukaryota</taxon>
        <taxon>Fungi</taxon>
        <taxon>Dikarya</taxon>
        <taxon>Ascomycota</taxon>
        <taxon>Taphrinomycotina</taxon>
        <taxon>Schizosaccharomycetes</taxon>
        <taxon>Schizosaccharomycetales</taxon>
        <taxon>Schizosaccharomycetaceae</taxon>
        <taxon>Schizosaccharomyces</taxon>
    </lineage>
</organism>
<gene>
    <name type="primary">str1</name>
    <name type="ORF">SPBC4F6.09</name>
</gene>
<reference key="1">
    <citation type="journal article" date="2002" name="Nature">
        <title>The genome sequence of Schizosaccharomyces pombe.</title>
        <authorList>
            <person name="Wood V."/>
            <person name="Gwilliam R."/>
            <person name="Rajandream M.A."/>
            <person name="Lyne M.H."/>
            <person name="Lyne R."/>
            <person name="Stewart A."/>
            <person name="Sgouros J.G."/>
            <person name="Peat N."/>
            <person name="Hayles J."/>
            <person name="Baker S.G."/>
            <person name="Basham D."/>
            <person name="Bowman S."/>
            <person name="Brooks K."/>
            <person name="Brown D."/>
            <person name="Brown S."/>
            <person name="Chillingworth T."/>
            <person name="Churcher C.M."/>
            <person name="Collins M."/>
            <person name="Connor R."/>
            <person name="Cronin A."/>
            <person name="Davis P."/>
            <person name="Feltwell T."/>
            <person name="Fraser A."/>
            <person name="Gentles S."/>
            <person name="Goble A."/>
            <person name="Hamlin N."/>
            <person name="Harris D.E."/>
            <person name="Hidalgo J."/>
            <person name="Hodgson G."/>
            <person name="Holroyd S."/>
            <person name="Hornsby T."/>
            <person name="Howarth S."/>
            <person name="Huckle E.J."/>
            <person name="Hunt S."/>
            <person name="Jagels K."/>
            <person name="James K.D."/>
            <person name="Jones L."/>
            <person name="Jones M."/>
            <person name="Leather S."/>
            <person name="McDonald S."/>
            <person name="McLean J."/>
            <person name="Mooney P."/>
            <person name="Moule S."/>
            <person name="Mungall K.L."/>
            <person name="Murphy L.D."/>
            <person name="Niblett D."/>
            <person name="Odell C."/>
            <person name="Oliver K."/>
            <person name="O'Neil S."/>
            <person name="Pearson D."/>
            <person name="Quail M.A."/>
            <person name="Rabbinowitsch E."/>
            <person name="Rutherford K.M."/>
            <person name="Rutter S."/>
            <person name="Saunders D."/>
            <person name="Seeger K."/>
            <person name="Sharp S."/>
            <person name="Skelton J."/>
            <person name="Simmonds M.N."/>
            <person name="Squares R."/>
            <person name="Squares S."/>
            <person name="Stevens K."/>
            <person name="Taylor K."/>
            <person name="Taylor R.G."/>
            <person name="Tivey A."/>
            <person name="Walsh S.V."/>
            <person name="Warren T."/>
            <person name="Whitehead S."/>
            <person name="Woodward J.R."/>
            <person name="Volckaert G."/>
            <person name="Aert R."/>
            <person name="Robben J."/>
            <person name="Grymonprez B."/>
            <person name="Weltjens I."/>
            <person name="Vanstreels E."/>
            <person name="Rieger M."/>
            <person name="Schaefer M."/>
            <person name="Mueller-Auer S."/>
            <person name="Gabel C."/>
            <person name="Fuchs M."/>
            <person name="Duesterhoeft A."/>
            <person name="Fritzc C."/>
            <person name="Holzer E."/>
            <person name="Moestl D."/>
            <person name="Hilbert H."/>
            <person name="Borzym K."/>
            <person name="Langer I."/>
            <person name="Beck A."/>
            <person name="Lehrach H."/>
            <person name="Reinhardt R."/>
            <person name="Pohl T.M."/>
            <person name="Eger P."/>
            <person name="Zimmermann W."/>
            <person name="Wedler H."/>
            <person name="Wambutt R."/>
            <person name="Purnelle B."/>
            <person name="Goffeau A."/>
            <person name="Cadieu E."/>
            <person name="Dreano S."/>
            <person name="Gloux S."/>
            <person name="Lelaure V."/>
            <person name="Mottier S."/>
            <person name="Galibert F."/>
            <person name="Aves S.J."/>
            <person name="Xiang Z."/>
            <person name="Hunt C."/>
            <person name="Moore K."/>
            <person name="Hurst S.M."/>
            <person name="Lucas M."/>
            <person name="Rochet M."/>
            <person name="Gaillardin C."/>
            <person name="Tallada V.A."/>
            <person name="Garzon A."/>
            <person name="Thode G."/>
            <person name="Daga R.R."/>
            <person name="Cruzado L."/>
            <person name="Jimenez J."/>
            <person name="Sanchez M."/>
            <person name="del Rey F."/>
            <person name="Benito J."/>
            <person name="Dominguez A."/>
            <person name="Revuelta J.L."/>
            <person name="Moreno S."/>
            <person name="Armstrong J."/>
            <person name="Forsburg S.L."/>
            <person name="Cerutti L."/>
            <person name="Lowe T."/>
            <person name="McCombie W.R."/>
            <person name="Paulsen I."/>
            <person name="Potashkin J."/>
            <person name="Shpakovski G.V."/>
            <person name="Ussery D."/>
            <person name="Barrell B.G."/>
            <person name="Nurse P."/>
        </authorList>
    </citation>
    <scope>NUCLEOTIDE SEQUENCE [LARGE SCALE GENOMIC DNA]</scope>
    <source>
        <strain>972 / ATCC 24843</strain>
    </source>
</reference>
<reference key="2">
    <citation type="journal article" date="2003" name="Nucleic Acids Res.">
        <title>Fep1 represses expression of the fission yeast Schizosaccharomyces pombe siderophore-iron transport system.</title>
        <authorList>
            <person name="Pelletier B."/>
            <person name="Beaudoin J."/>
            <person name="Philpott C.C."/>
            <person name="Labbe S."/>
        </authorList>
    </citation>
    <scope>FUNCTION</scope>
</reference>
<reference key="3">
    <citation type="journal article" date="2008" name="J. Proteome Res.">
        <title>Phosphoproteome analysis of fission yeast.</title>
        <authorList>
            <person name="Wilson-Grady J.T."/>
            <person name="Villen J."/>
            <person name="Gygi S.P."/>
        </authorList>
    </citation>
    <scope>PHOSPHORYLATION [LARGE SCALE ANALYSIS] AT SER-5; SER-21; SER-22; SER-36 AND SER-41</scope>
    <scope>IDENTIFICATION BY MASS SPECTROMETRY</scope>
</reference>
<proteinExistence type="evidence at protein level"/>
<feature type="chain" id="PRO_0000084879" description="Siderophore iron transporter 1">
    <location>
        <begin position="1"/>
        <end position="612"/>
    </location>
</feature>
<feature type="transmembrane region" description="Helical" evidence="1">
    <location>
        <begin position="91"/>
        <end position="111"/>
    </location>
</feature>
<feature type="transmembrane region" description="Helical" evidence="1">
    <location>
        <begin position="125"/>
        <end position="145"/>
    </location>
</feature>
<feature type="transmembrane region" description="Helical" evidence="1">
    <location>
        <begin position="159"/>
        <end position="179"/>
    </location>
</feature>
<feature type="transmembrane region" description="Helical" evidence="1">
    <location>
        <begin position="188"/>
        <end position="208"/>
    </location>
</feature>
<feature type="transmembrane region" description="Helical" evidence="1">
    <location>
        <begin position="218"/>
        <end position="238"/>
    </location>
</feature>
<feature type="transmembrane region" description="Helical" evidence="1">
    <location>
        <begin position="249"/>
        <end position="269"/>
    </location>
</feature>
<feature type="transmembrane region" description="Helical" evidence="1">
    <location>
        <begin position="299"/>
        <end position="319"/>
    </location>
</feature>
<feature type="transmembrane region" description="Helical" evidence="1">
    <location>
        <begin position="331"/>
        <end position="351"/>
    </location>
</feature>
<feature type="transmembrane region" description="Helical" evidence="1">
    <location>
        <begin position="365"/>
        <end position="385"/>
    </location>
</feature>
<feature type="transmembrane region" description="Helical" evidence="1">
    <location>
        <begin position="406"/>
        <end position="426"/>
    </location>
</feature>
<feature type="transmembrane region" description="Helical" evidence="1">
    <location>
        <begin position="434"/>
        <end position="453"/>
    </location>
</feature>
<feature type="transmembrane region" description="Helical" evidence="1">
    <location>
        <begin position="464"/>
        <end position="484"/>
    </location>
</feature>
<feature type="transmembrane region" description="Helical" evidence="1">
    <location>
        <begin position="495"/>
        <end position="515"/>
    </location>
</feature>
<feature type="transmembrane region" description="Helical" evidence="1">
    <location>
        <begin position="573"/>
        <end position="593"/>
    </location>
</feature>
<feature type="modified residue" description="Phosphoserine" evidence="3">
    <location>
        <position position="5"/>
    </location>
</feature>
<feature type="modified residue" description="Phosphoserine" evidence="3">
    <location>
        <position position="21"/>
    </location>
</feature>
<feature type="modified residue" description="Phosphoserine" evidence="3">
    <location>
        <position position="22"/>
    </location>
</feature>
<feature type="modified residue" description="Phosphoserine" evidence="3">
    <location>
        <position position="36"/>
    </location>
</feature>
<feature type="modified residue" description="Phosphoserine" evidence="3">
    <location>
        <position position="41"/>
    </location>
</feature>
<dbReference type="EMBL" id="CU329671">
    <property type="protein sequence ID" value="CAA20729.1"/>
    <property type="molecule type" value="Genomic_DNA"/>
</dbReference>
<dbReference type="PIR" id="T40506">
    <property type="entry name" value="T40506"/>
</dbReference>
<dbReference type="RefSeq" id="NP_596109.1">
    <property type="nucleotide sequence ID" value="NM_001022026.2"/>
</dbReference>
<dbReference type="SMR" id="O74395"/>
<dbReference type="BioGRID" id="276750">
    <property type="interactions" value="1"/>
</dbReference>
<dbReference type="FunCoup" id="O74395">
    <property type="interactions" value="10"/>
</dbReference>
<dbReference type="STRING" id="284812.O74395"/>
<dbReference type="TCDB" id="2.A.1.16.6">
    <property type="family name" value="the major facilitator superfamily (mfs)"/>
</dbReference>
<dbReference type="iPTMnet" id="O74395"/>
<dbReference type="PaxDb" id="4896-SPBC4F6.09.1"/>
<dbReference type="EnsemblFungi" id="SPBC4F6.09.1">
    <property type="protein sequence ID" value="SPBC4F6.09.1:pep"/>
    <property type="gene ID" value="SPBC4F6.09"/>
</dbReference>
<dbReference type="GeneID" id="2540217"/>
<dbReference type="KEGG" id="spo:2540217"/>
<dbReference type="PomBase" id="SPBC4F6.09">
    <property type="gene designation" value="str1"/>
</dbReference>
<dbReference type="VEuPathDB" id="FungiDB:SPBC4F6.09"/>
<dbReference type="eggNOG" id="KOG0254">
    <property type="taxonomic scope" value="Eukaryota"/>
</dbReference>
<dbReference type="HOGENOM" id="CLU_012970_2_0_1"/>
<dbReference type="InParanoid" id="O74395"/>
<dbReference type="OMA" id="LMREPTI"/>
<dbReference type="PhylomeDB" id="O74395"/>
<dbReference type="PRO" id="PR:O74395"/>
<dbReference type="Proteomes" id="UP000002485">
    <property type="component" value="Chromosome II"/>
</dbReference>
<dbReference type="GO" id="GO:0005886">
    <property type="term" value="C:plasma membrane"/>
    <property type="evidence" value="ECO:0000318"/>
    <property type="project" value="GO_Central"/>
</dbReference>
<dbReference type="GO" id="GO:0015343">
    <property type="term" value="F:siderophore-iron transmembrane transporter activity"/>
    <property type="evidence" value="ECO:0000318"/>
    <property type="project" value="GO_Central"/>
</dbReference>
<dbReference type="GO" id="GO:0033214">
    <property type="term" value="P:siderophore-dependent iron import into cell"/>
    <property type="evidence" value="ECO:0000315"/>
    <property type="project" value="PomBase"/>
</dbReference>
<dbReference type="GO" id="GO:0055085">
    <property type="term" value="P:transmembrane transport"/>
    <property type="evidence" value="ECO:0000318"/>
    <property type="project" value="GO_Central"/>
</dbReference>
<dbReference type="CDD" id="cd17322">
    <property type="entry name" value="MFS_ARN_like"/>
    <property type="match status" value="1"/>
</dbReference>
<dbReference type="FunFam" id="1.20.1250.20:FF:000197">
    <property type="entry name" value="Siderophore iron transporter 1"/>
    <property type="match status" value="1"/>
</dbReference>
<dbReference type="Gene3D" id="1.20.1250.20">
    <property type="entry name" value="MFS general substrate transporter like domains"/>
    <property type="match status" value="2"/>
</dbReference>
<dbReference type="InterPro" id="IPR020846">
    <property type="entry name" value="MFS_dom"/>
</dbReference>
<dbReference type="InterPro" id="IPR010573">
    <property type="entry name" value="MFS_Str1/Tri12-like"/>
</dbReference>
<dbReference type="InterPro" id="IPR036259">
    <property type="entry name" value="MFS_trans_sf"/>
</dbReference>
<dbReference type="PANTHER" id="PTHR23501">
    <property type="entry name" value="MAJOR FACILITATOR SUPERFAMILY"/>
    <property type="match status" value="1"/>
</dbReference>
<dbReference type="PANTHER" id="PTHR23501:SF196">
    <property type="entry name" value="SIDEROPHORE IRON TRANSPORTER 1"/>
    <property type="match status" value="1"/>
</dbReference>
<dbReference type="Pfam" id="PF06609">
    <property type="entry name" value="TRI12"/>
    <property type="match status" value="1"/>
</dbReference>
<dbReference type="SUPFAM" id="SSF103473">
    <property type="entry name" value="MFS general substrate transporter"/>
    <property type="match status" value="2"/>
</dbReference>
<dbReference type="PROSITE" id="PS50850">
    <property type="entry name" value="MFS"/>
    <property type="match status" value="1"/>
</dbReference>